<keyword id="KW-0328">Glycosyltransferase</keyword>
<keyword id="KW-0808">Transferase</keyword>
<feature type="chain" id="PRO_0000452140" description="UDP-glycosyltransferase 708G2">
    <location>
        <begin position="1"/>
        <end position="472"/>
    </location>
</feature>
<feature type="region of interest" description="UDP" evidence="1">
    <location>
        <begin position="283"/>
        <end position="284"/>
    </location>
</feature>
<feature type="active site" description="Proton acceptor" evidence="1">
    <location>
        <position position="23"/>
    </location>
</feature>
<feature type="active site" description="Charge relay" evidence="1">
    <location>
        <position position="117"/>
    </location>
</feature>
<feature type="binding site" evidence="2">
    <location>
        <position position="23"/>
    </location>
    <ligand>
        <name>an anthocyanidin</name>
        <dbReference type="ChEBI" id="CHEBI:143576"/>
    </ligand>
</feature>
<feature type="binding site" evidence="1">
    <location>
        <position position="140"/>
    </location>
    <ligand>
        <name>UDP-alpha-D-glucose</name>
        <dbReference type="ChEBI" id="CHEBI:58885"/>
    </ligand>
</feature>
<feature type="binding site" evidence="1">
    <location>
        <position position="346"/>
    </location>
    <ligand>
        <name>UDP-alpha-D-glucose</name>
        <dbReference type="ChEBI" id="CHEBI:58885"/>
    </ligand>
</feature>
<feature type="binding site" evidence="1">
    <location>
        <position position="348"/>
    </location>
    <ligand>
        <name>UDP-alpha-D-glucose</name>
        <dbReference type="ChEBI" id="CHEBI:58885"/>
    </ligand>
</feature>
<feature type="binding site" evidence="1">
    <location>
        <position position="363"/>
    </location>
    <ligand>
        <name>UDP-alpha-D-glucose</name>
        <dbReference type="ChEBI" id="CHEBI:58885"/>
    </ligand>
</feature>
<feature type="binding site" evidence="1">
    <location>
        <position position="366"/>
    </location>
    <ligand>
        <name>UDP-alpha-D-glucose</name>
        <dbReference type="ChEBI" id="CHEBI:58885"/>
    </ligand>
</feature>
<feature type="binding site" evidence="1">
    <location>
        <position position="367"/>
    </location>
    <ligand>
        <name>UDP-alpha-D-glucose</name>
        <dbReference type="ChEBI" id="CHEBI:58885"/>
    </ligand>
</feature>
<feature type="binding site" evidence="1">
    <location>
        <position position="368"/>
    </location>
    <ligand>
        <name>UDP-alpha-D-glucose</name>
        <dbReference type="ChEBI" id="CHEBI:58885"/>
    </ligand>
</feature>
<feature type="binding site" evidence="1">
    <location>
        <position position="371"/>
    </location>
    <ligand>
        <name>UDP-alpha-D-glucose</name>
        <dbReference type="ChEBI" id="CHEBI:58885"/>
    </ligand>
</feature>
<feature type="binding site" evidence="2">
    <location>
        <position position="386"/>
    </location>
    <ligand>
        <name>an anthocyanidin</name>
        <dbReference type="ChEBI" id="CHEBI:143576"/>
    </ligand>
</feature>
<feature type="binding site" evidence="1">
    <location>
        <position position="387"/>
    </location>
    <ligand>
        <name>UDP-alpha-D-glucose</name>
        <dbReference type="ChEBI" id="CHEBI:58885"/>
    </ligand>
</feature>
<feature type="binding site" evidence="1">
    <location>
        <position position="388"/>
    </location>
    <ligand>
        <name>UDP-alpha-D-glucose</name>
        <dbReference type="ChEBI" id="CHEBI:58885"/>
    </ligand>
</feature>
<reference key="1">
    <citation type="journal article" date="2017" name="Plant J.">
        <title>C-Glycosyltransferases catalyzing the formation of di-C-glucosyl flavonoids in citrus plants.</title>
        <authorList>
            <person name="Ito T."/>
            <person name="Fujimoto S."/>
            <person name="Suito F."/>
            <person name="Shimosaka M."/>
            <person name="Taguchi G."/>
        </authorList>
    </citation>
    <scope>NUCLEOTIDE SEQUENCE [MRNA]</scope>
    <scope>FUNCTION</scope>
    <scope>CATALYTIC ACTIVITY</scope>
    <scope>BIOPHYSICOCHEMICAL PROPERTIES</scope>
    <scope>TISSUE SPECIFICITY</scope>
</reference>
<reference key="2">
    <citation type="journal article" date="2017" name="Front. Genet.">
        <title>Draft sequencing of the heterozygous diploid genome of Satsuma (Citrus unshiu Marc.) using a hybrid assembly approach.</title>
        <authorList>
            <person name="Shimizu T."/>
            <person name="Tanizawa Y."/>
            <person name="Mochizuki T."/>
            <person name="Nagasaki H."/>
            <person name="Yoshioka T."/>
            <person name="Toyoda A."/>
            <person name="Fujiyama A."/>
            <person name="Kaminuma E."/>
            <person name="Nakamura Y."/>
        </authorList>
    </citation>
    <scope>NUCLEOTIDE SEQUENCE [LARGE SCALE GENOMIC DNA]</scope>
    <source>
        <strain>cv. Miyagawa wase</strain>
    </source>
</reference>
<evidence type="ECO:0000250" key="1">
    <source>
        <dbReference type="UniProtKB" id="A0A0A1HA03"/>
    </source>
</evidence>
<evidence type="ECO:0000250" key="2">
    <source>
        <dbReference type="UniProtKB" id="P51094"/>
    </source>
</evidence>
<evidence type="ECO:0000269" key="3">
    <source>
    </source>
</evidence>
<evidence type="ECO:0000303" key="4">
    <source>
    </source>
</evidence>
<evidence type="ECO:0000305" key="5"/>
<evidence type="ECO:0000312" key="6">
    <source>
        <dbReference type="EMBL" id="GAY36765.1"/>
    </source>
</evidence>
<accession>A0A224AKZ9</accession>
<name>708G2_CITUN</name>
<dbReference type="EC" id="2.4.1.360" evidence="3"/>
<dbReference type="EMBL" id="LC131334">
    <property type="protein sequence ID" value="BBA18063.1"/>
    <property type="molecule type" value="mRNA"/>
</dbReference>
<dbReference type="EMBL" id="BDQV01000004">
    <property type="protein sequence ID" value="GAY36765.1"/>
    <property type="molecule type" value="Genomic_DNA"/>
</dbReference>
<dbReference type="SMR" id="A0A224AKZ9"/>
<dbReference type="GO" id="GO:0120514">
    <property type="term" value="F:2-hydroxyflavanone C-glucosyltransferase activity"/>
    <property type="evidence" value="ECO:0007669"/>
    <property type="project" value="UniProtKB-EC"/>
</dbReference>
<dbReference type="GO" id="GO:0035251">
    <property type="term" value="F:UDP-glucosyltransferase activity"/>
    <property type="evidence" value="ECO:0000314"/>
    <property type="project" value="UniProtKB"/>
</dbReference>
<dbReference type="CDD" id="cd03784">
    <property type="entry name" value="GT1_Gtf-like"/>
    <property type="match status" value="1"/>
</dbReference>
<dbReference type="FunFam" id="3.40.50.2000:FF:000060">
    <property type="entry name" value="Glycosyltransferase"/>
    <property type="match status" value="1"/>
</dbReference>
<dbReference type="Gene3D" id="3.40.50.2000">
    <property type="entry name" value="Glycogen Phosphorylase B"/>
    <property type="match status" value="2"/>
</dbReference>
<dbReference type="InterPro" id="IPR050481">
    <property type="entry name" value="UDP-glycosyltransf_plant"/>
</dbReference>
<dbReference type="InterPro" id="IPR002213">
    <property type="entry name" value="UDP_glucos_trans"/>
</dbReference>
<dbReference type="InterPro" id="IPR035595">
    <property type="entry name" value="UDP_glycos_trans_CS"/>
</dbReference>
<dbReference type="PANTHER" id="PTHR48048">
    <property type="entry name" value="GLYCOSYLTRANSFERASE"/>
    <property type="match status" value="1"/>
</dbReference>
<dbReference type="PANTHER" id="PTHR48048:SF76">
    <property type="entry name" value="UDP-GLYCOSYLTRANSFERASE 708D1-LIKE"/>
    <property type="match status" value="1"/>
</dbReference>
<dbReference type="Pfam" id="PF00201">
    <property type="entry name" value="UDPGT"/>
    <property type="match status" value="1"/>
</dbReference>
<dbReference type="SUPFAM" id="SSF53756">
    <property type="entry name" value="UDP-Glycosyltransferase/glycogen phosphorylase"/>
    <property type="match status" value="1"/>
</dbReference>
<dbReference type="PROSITE" id="PS00375">
    <property type="entry name" value="UDPGT"/>
    <property type="match status" value="1"/>
</dbReference>
<proteinExistence type="evidence at protein level"/>
<comment type="function">
    <text evidence="3">UDP-glucose-dependent glucosyltransferase catalyzing the C-glucosylation of 2-hydroxyflavanones (2-hydroxylnaringenin and 2-hydroxypinocembrin) and phloretin (PubMed:28370711). No activity with flavanones, flavones or flavonols (PubMed:28370711). Exhibits C-glucosylation activity toward 2-phenyl-2',4',6'-trihydroxyacetophenone (PubMed:28370711). Can use UDP-xylose as sugar donor, but catalytic efficiency is much lower toward UDP-xylose than toward UDP-glucose (PubMed:28370711).</text>
</comment>
<comment type="catalytic activity">
    <reaction evidence="3">
        <text>a 3'-hydro-2'-hydroxy-beta-oxodihydrochalcone + UDP-alpha-D-glucose = a 3'-(beta-D-glucopyranosyl)-2'-hydroxy-beta-oxodihydrochalcone + UDP + H(+)</text>
        <dbReference type="Rhea" id="RHEA:51504"/>
        <dbReference type="ChEBI" id="CHEBI:15378"/>
        <dbReference type="ChEBI" id="CHEBI:58223"/>
        <dbReference type="ChEBI" id="CHEBI:58885"/>
        <dbReference type="ChEBI" id="CHEBI:142482"/>
        <dbReference type="ChEBI" id="CHEBI:142483"/>
        <dbReference type="EC" id="2.4.1.360"/>
    </reaction>
    <physiologicalReaction direction="left-to-right" evidence="3">
        <dbReference type="Rhea" id="RHEA:51505"/>
    </physiologicalReaction>
</comment>
<comment type="biophysicochemical properties">
    <phDependence>
        <text evidence="3">Optimum pH is 8.0-11.0.</text>
    </phDependence>
    <temperatureDependence>
        <text evidence="3">Optimum temperature is 45 degrees Celsius.</text>
    </temperatureDependence>
</comment>
<comment type="tissue specificity">
    <text evidence="3">Expressed at low levels in leaves, flowers and immature leaves.</text>
</comment>
<comment type="similarity">
    <text evidence="5">Belongs to the UDP-glycosyltransferase family.</text>
</comment>
<sequence>MSDSGGFDSHPHVALIPSAGMGHLTPFLRLAASLVQHHCRVTLITTYPTVSLAETQHVSHFLSAYPQVTEKRFHLLPFDPNSANATDPFLLRWEAIRRSAHLLAPLLSPPLSALITDVTLISAVLPVTINLHLPNYVLFTASAKMFSLTASFPAIVASKSTSSGSVEFDDDFIEIPGLPPIPLSSVPPAVMDSKSLFATSFLENGNSFVKSNGVLINSFDALEADTLVALNGRRVVAGLPPVYAVGPLLPCEFEKRDDPSTSLILKWLDDQPEGSVVYVSFGSRLALSMEQTKELGDGLLSSGCRFLWVVKGKIVDKEDEESLKNVLGHELTEKIKDQGLVVKNWVDQDKVLSHRAVGGFVSHGGWNSLVEAARHGVPLLVWPHFGDQKINAEAVERAGLGMWVRSWGWGTELRAKGDEIGLKIKDLMANDFLREQAKRIEEEARKAIGVGGSSERTFKELIDKWKCNNNTH</sequence>
<organism>
    <name type="scientific">Citrus unshiu</name>
    <name type="common">Satsuma mandarin</name>
    <name type="synonym">Citrus nobilis var. unshiu</name>
    <dbReference type="NCBI Taxonomy" id="55188"/>
    <lineage>
        <taxon>Eukaryota</taxon>
        <taxon>Viridiplantae</taxon>
        <taxon>Streptophyta</taxon>
        <taxon>Embryophyta</taxon>
        <taxon>Tracheophyta</taxon>
        <taxon>Spermatophyta</taxon>
        <taxon>Magnoliopsida</taxon>
        <taxon>eudicotyledons</taxon>
        <taxon>Gunneridae</taxon>
        <taxon>Pentapetalae</taxon>
        <taxon>rosids</taxon>
        <taxon>malvids</taxon>
        <taxon>Sapindales</taxon>
        <taxon>Rutaceae</taxon>
        <taxon>Aurantioideae</taxon>
        <taxon>Citrus</taxon>
    </lineage>
</organism>
<protein>
    <recommendedName>
        <fullName evidence="4">UDP-glycosyltransferase 708G2</fullName>
        <ecNumber evidence="3">2.4.1.360</ecNumber>
    </recommendedName>
    <alternativeName>
        <fullName evidence="5">2-hydroxyflavanone C-glucosyltransferase</fullName>
    </alternativeName>
    <alternativeName>
        <fullName evidence="4">CuCGT</fullName>
    </alternativeName>
</protein>
<gene>
    <name type="primary">UGT708G2</name>
    <name evidence="6" type="ORF">CUMW_024380</name>
</gene>